<organismHost>
    <name type="scientific">Equus caballus</name>
    <name type="common">Horse</name>
    <dbReference type="NCBI Taxonomy" id="9796"/>
</organismHost>
<sequence>MWLPNLVRFVAVAYLICAGAILTYASGASASSSQSTPATPTHTTPNLTTAHGAGSDNTTNANGTESTHSHETTITCTKSLISVPYYKSVDMNCTTSVGVNYSEYRLEIYLNQRTPFSGTPPGDEENYINHNATKDQTLLLFSTAERKKSRRGGQLGVIPDRLPKRQLFNLPLHTEGGTKFPLTIKSVDWRTAGIYVWSLYAKNGTLVNSTSVTVSTYNAPLLDLSVHPSLKGENYRATCVVASYFPHSSVKLRWYKNAREVDFTKYVTNASSVWVDGLITRISTVSIPVDPEEEYTPSLRCSIDWYRDEVSFARIAKAGTPSVFVAPTVSVSVEDGDAVCTAKCVPSTGVFVSWSVNDHLPGVPSQDMTTGVCPSHSGLVNMQSRRPLSEENGEREYSCIIEGYPDGLPMFSDTVVYDASPIVEDRPVLTSIIAVTCGAAALALVVLITAVCFYCSKPSQAPYKKSDF</sequence>
<protein>
    <recommendedName>
        <fullName>Envelope glycoprotein C</fullName>
        <shortName>gC</shortName>
    </recommendedName>
    <alternativeName>
        <fullName>Glycoprotein 13</fullName>
    </alternativeName>
</protein>
<comment type="function">
    <text evidence="1">Essential for the initial attachment to heparan sulfate moieties of the host cell surface proteoglycans. Also plays a role in host immune evasion by inhibiting the host complement cascade activation.</text>
</comment>
<comment type="subunit">
    <text evidence="1">Interacts with host complement component C3; this interaction inhibits host immune response by disregulating complement cascade.</text>
</comment>
<comment type="subcellular location">
    <subcellularLocation>
        <location evidence="5">Virion membrane</location>
        <topology evidence="5">Single-pass membrane protein</topology>
    </subcellularLocation>
</comment>
<comment type="similarity">
    <text evidence="5">Belongs to the herpesviridae glycoprotein C family.</text>
</comment>
<organism>
    <name type="scientific">Equine herpesvirus 1 (strain Ab4p)</name>
    <name type="common">EHV-1</name>
    <name type="synonym">Equine abortion virus</name>
    <dbReference type="NCBI Taxonomy" id="31520"/>
    <lineage>
        <taxon>Viruses</taxon>
        <taxon>Duplodnaviria</taxon>
        <taxon>Heunggongvirae</taxon>
        <taxon>Peploviricota</taxon>
        <taxon>Herviviricetes</taxon>
        <taxon>Herpesvirales</taxon>
        <taxon>Orthoherpesviridae</taxon>
        <taxon>Alphaherpesvirinae</taxon>
        <taxon>Varicellovirus</taxon>
        <taxon>Varicellovirus equidalpha1</taxon>
        <taxon>Equid alphaherpesvirus 1</taxon>
    </lineage>
</organism>
<reference key="1">
    <citation type="journal article" date="1992" name="Virology">
        <title>The DNA sequence of equine herpesvirus-1.</title>
        <authorList>
            <person name="Telford E.A.R."/>
            <person name="Watson M.S."/>
            <person name="McBride K."/>
            <person name="Davison A.J."/>
        </authorList>
    </citation>
    <scope>NUCLEOTIDE SEQUENCE [LARGE SCALE GENOMIC DNA]</scope>
</reference>
<keyword id="KW-1015">Disulfide bond</keyword>
<keyword id="KW-0325">Glycoprotein</keyword>
<keyword id="KW-0945">Host-virus interaction</keyword>
<keyword id="KW-0393">Immunoglobulin domain</keyword>
<keyword id="KW-1087">Inhibition of host complement factors by virus</keyword>
<keyword id="KW-0472">Membrane</keyword>
<keyword id="KW-1185">Reference proteome</keyword>
<keyword id="KW-0677">Repeat</keyword>
<keyword id="KW-0732">Signal</keyword>
<keyword id="KW-0812">Transmembrane</keyword>
<keyword id="KW-1133">Transmembrane helix</keyword>
<keyword id="KW-1233">Viral attachment to host adhesion receptor</keyword>
<keyword id="KW-1161">Viral attachment to host cell</keyword>
<keyword id="KW-0899">Viral immunoevasion</keyword>
<keyword id="KW-0946">Virion</keyword>
<keyword id="KW-1160">Virus entry into host cell</keyword>
<proteinExistence type="inferred from homology"/>
<accession>Q6S6Q5</accession>
<accession>P12889</accession>
<accession>P36321</accession>
<name>GC_EHV1B</name>
<dbReference type="EMBL" id="AY665713">
    <property type="protein sequence ID" value="AAT67273.1"/>
    <property type="molecule type" value="Genomic_DNA"/>
</dbReference>
<dbReference type="PIR" id="A28149">
    <property type="entry name" value="VGBEEH"/>
</dbReference>
<dbReference type="GlyCosmos" id="Q6S6Q5">
    <property type="glycosylation" value="9 sites, No reported glycans"/>
</dbReference>
<dbReference type="KEGG" id="vg:1487561"/>
<dbReference type="Proteomes" id="UP000001189">
    <property type="component" value="Segment"/>
</dbReference>
<dbReference type="GO" id="GO:0016020">
    <property type="term" value="C:membrane"/>
    <property type="evidence" value="ECO:0007669"/>
    <property type="project" value="UniProtKB-KW"/>
</dbReference>
<dbReference type="GO" id="GO:0055036">
    <property type="term" value="C:virion membrane"/>
    <property type="evidence" value="ECO:0007669"/>
    <property type="project" value="UniProtKB-SubCell"/>
</dbReference>
<dbReference type="GO" id="GO:0098671">
    <property type="term" value="P:adhesion receptor-mediated virion attachment to host cell"/>
    <property type="evidence" value="ECO:0007669"/>
    <property type="project" value="UniProtKB-KW"/>
</dbReference>
<dbReference type="GO" id="GO:0046718">
    <property type="term" value="P:symbiont entry into host cell"/>
    <property type="evidence" value="ECO:0007669"/>
    <property type="project" value="UniProtKB-KW"/>
</dbReference>
<dbReference type="GO" id="GO:0042784">
    <property type="term" value="P:symbiont-mediated suppression of host complement activation"/>
    <property type="evidence" value="ECO:0007669"/>
    <property type="project" value="UniProtKB-KW"/>
</dbReference>
<dbReference type="InterPro" id="IPR001038">
    <property type="entry name" value="GA_GC"/>
</dbReference>
<dbReference type="InterPro" id="IPR007110">
    <property type="entry name" value="Ig-like_dom"/>
</dbReference>
<dbReference type="InterPro" id="IPR036179">
    <property type="entry name" value="Ig-like_dom_sf"/>
</dbReference>
<dbReference type="Pfam" id="PF02124">
    <property type="entry name" value="Marek_A"/>
    <property type="match status" value="1"/>
</dbReference>
<dbReference type="PRINTS" id="PR00668">
    <property type="entry name" value="GLYCPROTEINC"/>
</dbReference>
<dbReference type="SUPFAM" id="SSF48726">
    <property type="entry name" value="Immunoglobulin"/>
    <property type="match status" value="1"/>
</dbReference>
<dbReference type="PROSITE" id="PS50835">
    <property type="entry name" value="IG_LIKE"/>
    <property type="match status" value="2"/>
</dbReference>
<gene>
    <name type="primary">gC</name>
    <name type="synonym">GP13</name>
    <name type="ordered locus">16</name>
</gene>
<feature type="signal peptide" evidence="2">
    <location>
        <begin position="1"/>
        <end position="30"/>
    </location>
</feature>
<feature type="chain" id="PRO_0000038202" description="Envelope glycoprotein C">
    <location>
        <begin position="31"/>
        <end position="468"/>
    </location>
</feature>
<feature type="topological domain" description="Virion surface" evidence="2">
    <location>
        <begin position="31"/>
        <end position="431"/>
    </location>
</feature>
<feature type="transmembrane region" description="Helical" evidence="2">
    <location>
        <begin position="432"/>
        <end position="451"/>
    </location>
</feature>
<feature type="topological domain" description="Cytoplasmic" evidence="2">
    <location>
        <begin position="452"/>
        <end position="468"/>
    </location>
</feature>
<feature type="domain" description="Ig-like 1">
    <location>
        <begin position="220"/>
        <end position="311"/>
    </location>
</feature>
<feature type="domain" description="Ig-like 2">
    <location>
        <begin position="321"/>
        <end position="416"/>
    </location>
</feature>
<feature type="region of interest" description="Disordered" evidence="4">
    <location>
        <begin position="31"/>
        <end position="73"/>
    </location>
</feature>
<feature type="compositionally biased region" description="Low complexity" evidence="4">
    <location>
        <begin position="31"/>
        <end position="50"/>
    </location>
</feature>
<feature type="glycosylation site" description="N-linked (GlcNAc...) asparagine; by host" evidence="2">
    <location>
        <position position="46"/>
    </location>
</feature>
<feature type="glycosylation site" description="N-linked (GlcNAc...) asparagine; by host" evidence="2">
    <location>
        <position position="57"/>
    </location>
</feature>
<feature type="glycosylation site" description="N-linked (GlcNAc...) asparagine; by host" evidence="2">
    <location>
        <position position="62"/>
    </location>
</feature>
<feature type="glycosylation site" description="N-linked (GlcNAc...) asparagine; by host" evidence="2">
    <location>
        <position position="92"/>
    </location>
</feature>
<feature type="glycosylation site" description="N-linked (GlcNAc...) asparagine; by host" evidence="2">
    <location>
        <position position="100"/>
    </location>
</feature>
<feature type="glycosylation site" description="N-linked (GlcNAc...) asparagine; by host" evidence="2">
    <location>
        <position position="131"/>
    </location>
</feature>
<feature type="glycosylation site" description="N-linked (GlcNAc...) asparagine; by host" evidence="2">
    <location>
        <position position="203"/>
    </location>
</feature>
<feature type="glycosylation site" description="N-linked (GlcNAc...) asparagine; by host" evidence="2">
    <location>
        <position position="208"/>
    </location>
</feature>
<feature type="glycosylation site" description="N-linked (GlcNAc...) asparagine; by host" evidence="2">
    <location>
        <position position="269"/>
    </location>
</feature>
<feature type="disulfide bond" evidence="3">
    <location>
        <begin position="76"/>
        <end position="93"/>
    </location>
</feature>
<feature type="disulfide bond" evidence="3">
    <location>
        <begin position="239"/>
        <end position="301"/>
    </location>
</feature>
<feature type="disulfide bond" evidence="3">
    <location>
        <begin position="340"/>
        <end position="399"/>
    </location>
</feature>
<feature type="disulfide bond" evidence="3">
    <location>
        <begin position="344"/>
        <end position="373"/>
    </location>
</feature>
<evidence type="ECO:0000250" key="1"/>
<evidence type="ECO:0000255" key="2"/>
<evidence type="ECO:0000255" key="3">
    <source>
        <dbReference type="PROSITE-ProRule" id="PRU00114"/>
    </source>
</evidence>
<evidence type="ECO:0000256" key="4">
    <source>
        <dbReference type="SAM" id="MobiDB-lite"/>
    </source>
</evidence>
<evidence type="ECO:0000305" key="5"/>